<protein>
    <recommendedName>
        <fullName evidence="1">Small ribosomal subunit protein uS13</fullName>
    </recommendedName>
    <alternativeName>
        <fullName evidence="3">30S ribosomal protein S13</fullName>
    </alternativeName>
</protein>
<organism>
    <name type="scientific">Staphylococcus haemolyticus (strain JCSC1435)</name>
    <dbReference type="NCBI Taxonomy" id="279808"/>
    <lineage>
        <taxon>Bacteria</taxon>
        <taxon>Bacillati</taxon>
        <taxon>Bacillota</taxon>
        <taxon>Bacilli</taxon>
        <taxon>Bacillales</taxon>
        <taxon>Staphylococcaceae</taxon>
        <taxon>Staphylococcus</taxon>
    </lineage>
</organism>
<dbReference type="EMBL" id="AP006716">
    <property type="protein sequence ID" value="BAE04135.1"/>
    <property type="molecule type" value="Genomic_DNA"/>
</dbReference>
<dbReference type="RefSeq" id="WP_011275142.1">
    <property type="nucleotide sequence ID" value="NC_007168.1"/>
</dbReference>
<dbReference type="SMR" id="Q4L890"/>
<dbReference type="GeneID" id="93780215"/>
<dbReference type="KEGG" id="sha:SH0826"/>
<dbReference type="eggNOG" id="COG0099">
    <property type="taxonomic scope" value="Bacteria"/>
</dbReference>
<dbReference type="HOGENOM" id="CLU_103849_1_1_9"/>
<dbReference type="OrthoDB" id="9803610at2"/>
<dbReference type="Proteomes" id="UP000000543">
    <property type="component" value="Chromosome"/>
</dbReference>
<dbReference type="GO" id="GO:0005829">
    <property type="term" value="C:cytosol"/>
    <property type="evidence" value="ECO:0007669"/>
    <property type="project" value="TreeGrafter"/>
</dbReference>
<dbReference type="GO" id="GO:0015935">
    <property type="term" value="C:small ribosomal subunit"/>
    <property type="evidence" value="ECO:0007669"/>
    <property type="project" value="TreeGrafter"/>
</dbReference>
<dbReference type="GO" id="GO:0019843">
    <property type="term" value="F:rRNA binding"/>
    <property type="evidence" value="ECO:0007669"/>
    <property type="project" value="UniProtKB-UniRule"/>
</dbReference>
<dbReference type="GO" id="GO:0003735">
    <property type="term" value="F:structural constituent of ribosome"/>
    <property type="evidence" value="ECO:0007669"/>
    <property type="project" value="InterPro"/>
</dbReference>
<dbReference type="GO" id="GO:0000049">
    <property type="term" value="F:tRNA binding"/>
    <property type="evidence" value="ECO:0007669"/>
    <property type="project" value="UniProtKB-UniRule"/>
</dbReference>
<dbReference type="GO" id="GO:0006412">
    <property type="term" value="P:translation"/>
    <property type="evidence" value="ECO:0007669"/>
    <property type="project" value="UniProtKB-UniRule"/>
</dbReference>
<dbReference type="FunFam" id="1.10.8.50:FF:000001">
    <property type="entry name" value="30S ribosomal protein S13"/>
    <property type="match status" value="1"/>
</dbReference>
<dbReference type="FunFam" id="4.10.910.10:FF:000001">
    <property type="entry name" value="30S ribosomal protein S13"/>
    <property type="match status" value="1"/>
</dbReference>
<dbReference type="Gene3D" id="1.10.8.50">
    <property type="match status" value="1"/>
</dbReference>
<dbReference type="Gene3D" id="4.10.910.10">
    <property type="entry name" value="30s ribosomal protein s13, domain 2"/>
    <property type="match status" value="1"/>
</dbReference>
<dbReference type="HAMAP" id="MF_01315">
    <property type="entry name" value="Ribosomal_uS13"/>
    <property type="match status" value="1"/>
</dbReference>
<dbReference type="InterPro" id="IPR027437">
    <property type="entry name" value="Rbsml_uS13_C"/>
</dbReference>
<dbReference type="InterPro" id="IPR001892">
    <property type="entry name" value="Ribosomal_uS13"/>
</dbReference>
<dbReference type="InterPro" id="IPR010979">
    <property type="entry name" value="Ribosomal_uS13-like_H2TH"/>
</dbReference>
<dbReference type="InterPro" id="IPR019980">
    <property type="entry name" value="Ribosomal_uS13_bac-type"/>
</dbReference>
<dbReference type="InterPro" id="IPR018269">
    <property type="entry name" value="Ribosomal_uS13_CS"/>
</dbReference>
<dbReference type="NCBIfam" id="TIGR03631">
    <property type="entry name" value="uS13_bact"/>
    <property type="match status" value="1"/>
</dbReference>
<dbReference type="PANTHER" id="PTHR10871">
    <property type="entry name" value="30S RIBOSOMAL PROTEIN S13/40S RIBOSOMAL PROTEIN S18"/>
    <property type="match status" value="1"/>
</dbReference>
<dbReference type="PANTHER" id="PTHR10871:SF1">
    <property type="entry name" value="SMALL RIBOSOMAL SUBUNIT PROTEIN US13M"/>
    <property type="match status" value="1"/>
</dbReference>
<dbReference type="Pfam" id="PF00416">
    <property type="entry name" value="Ribosomal_S13"/>
    <property type="match status" value="1"/>
</dbReference>
<dbReference type="PIRSF" id="PIRSF002134">
    <property type="entry name" value="Ribosomal_S13"/>
    <property type="match status" value="1"/>
</dbReference>
<dbReference type="SUPFAM" id="SSF46946">
    <property type="entry name" value="S13-like H2TH domain"/>
    <property type="match status" value="1"/>
</dbReference>
<dbReference type="PROSITE" id="PS00646">
    <property type="entry name" value="RIBOSOMAL_S13_1"/>
    <property type="match status" value="1"/>
</dbReference>
<dbReference type="PROSITE" id="PS50159">
    <property type="entry name" value="RIBOSOMAL_S13_2"/>
    <property type="match status" value="1"/>
</dbReference>
<accession>Q4L890</accession>
<proteinExistence type="inferred from homology"/>
<reference key="1">
    <citation type="journal article" date="2005" name="J. Bacteriol.">
        <title>Whole-genome sequencing of Staphylococcus haemolyticus uncovers the extreme plasticity of its genome and the evolution of human-colonizing staphylococcal species.</title>
        <authorList>
            <person name="Takeuchi F."/>
            <person name="Watanabe S."/>
            <person name="Baba T."/>
            <person name="Yuzawa H."/>
            <person name="Ito T."/>
            <person name="Morimoto Y."/>
            <person name="Kuroda M."/>
            <person name="Cui L."/>
            <person name="Takahashi M."/>
            <person name="Ankai A."/>
            <person name="Baba S."/>
            <person name="Fukui S."/>
            <person name="Lee J.C."/>
            <person name="Hiramatsu K."/>
        </authorList>
    </citation>
    <scope>NUCLEOTIDE SEQUENCE [LARGE SCALE GENOMIC DNA]</scope>
    <source>
        <strain>JCSC1435</strain>
    </source>
</reference>
<evidence type="ECO:0000255" key="1">
    <source>
        <dbReference type="HAMAP-Rule" id="MF_01315"/>
    </source>
</evidence>
<evidence type="ECO:0000256" key="2">
    <source>
        <dbReference type="SAM" id="MobiDB-lite"/>
    </source>
</evidence>
<evidence type="ECO:0000305" key="3"/>
<name>RS13_STAHJ</name>
<gene>
    <name evidence="1" type="primary">rpsM</name>
    <name type="ordered locus">SH0826</name>
</gene>
<keyword id="KW-0687">Ribonucleoprotein</keyword>
<keyword id="KW-0689">Ribosomal protein</keyword>
<keyword id="KW-0694">RNA-binding</keyword>
<keyword id="KW-0699">rRNA-binding</keyword>
<keyword id="KW-0820">tRNA-binding</keyword>
<feature type="chain" id="PRO_0000132142" description="Small ribosomal subunit protein uS13">
    <location>
        <begin position="1"/>
        <end position="121"/>
    </location>
</feature>
<feature type="region of interest" description="Disordered" evidence="2">
    <location>
        <begin position="91"/>
        <end position="121"/>
    </location>
</feature>
<sequence>MARIAGVDIPREKRIVISLTYVYGIGTSTAKKIVEEANVSADTRVKDLTDDELGRIREVVDSYKVEGDLRREQNLNIKRLMEISSYRGIRHRRGLPVRGQKTKNNARTRKGPVKTVANKKK</sequence>
<comment type="function">
    <text evidence="1">Located at the top of the head of the 30S subunit, it contacts several helices of the 16S rRNA. In the 70S ribosome it contacts the 23S rRNA (bridge B1a) and protein L5 of the 50S subunit (bridge B1b), connecting the 2 subunits; these bridges are implicated in subunit movement. Contacts the tRNAs in the A and P-sites.</text>
</comment>
<comment type="subunit">
    <text evidence="1">Part of the 30S ribosomal subunit. Forms a loose heterodimer with protein S19. Forms two bridges to the 50S subunit in the 70S ribosome.</text>
</comment>
<comment type="similarity">
    <text evidence="1">Belongs to the universal ribosomal protein uS13 family.</text>
</comment>